<evidence type="ECO:0000269" key="1">
    <source>
    </source>
</evidence>
<evidence type="ECO:0000305" key="2"/>
<organism>
    <name type="scientific">Klebsiella pneumoniae</name>
    <dbReference type="NCBI Taxonomy" id="573"/>
    <lineage>
        <taxon>Bacteria</taxon>
        <taxon>Pseudomonadati</taxon>
        <taxon>Pseudomonadota</taxon>
        <taxon>Gammaproteobacteria</taxon>
        <taxon>Enterobacterales</taxon>
        <taxon>Enterobacteriaceae</taxon>
        <taxon>Klebsiella/Raoultella group</taxon>
        <taxon>Klebsiella</taxon>
        <taxon>Klebsiella pneumoniae complex</taxon>
    </lineage>
</organism>
<protein>
    <recommendedName>
        <fullName>Fimbrial subunit type 1</fullName>
    </recommendedName>
</protein>
<feature type="signal peptide" evidence="1">
    <location>
        <begin position="1"/>
        <end position="23"/>
    </location>
</feature>
<feature type="chain" id="PRO_0000009225" description="Fimbrial subunit type 1">
    <location>
        <begin position="24"/>
        <end position="182"/>
    </location>
</feature>
<feature type="disulfide bond" evidence="2">
    <location>
        <begin position="44"/>
        <end position="84"/>
    </location>
</feature>
<reference key="1">
    <citation type="journal article" date="1987" name="J. Bacteriol.">
        <title>Nucleotide sequences of the genes encoding type 1 fimbrial subunits of Klebsiella pneumoniae and Salmonella typhimurium.</title>
        <authorList>
            <person name="Purcell B.K."/>
            <person name="Pruckler J."/>
            <person name="Clegg S."/>
        </authorList>
    </citation>
    <scope>NUCLEOTIDE SEQUENCE [GENOMIC DNA]</scope>
</reference>
<reference key="2">
    <citation type="journal article" date="1982" name="J. Biol. Chem.">
        <title>Purification and chemical characterization of type 1 pili isolated from Klebsiella pneumoniae.</title>
        <authorList>
            <person name="Fader R.C."/>
            <person name="Duffy L.K."/>
            <person name="Davis C.P."/>
            <person name="Kurosky A."/>
        </authorList>
    </citation>
    <scope>PROTEIN SEQUENCE OF 24-48</scope>
</reference>
<sequence length="182" mass="18179">MKIKTLAIVVLSALSLSSAAALADTTTVNGGTVHFKGEVVNAACAVDAGSVDQTVQLGQVRTASLKQAGANSSAVVFNIQLNDCDTTVATKAAVAFLGTAIGPTHTDVLALQSSAAGSATNVGVQILDRTGAGLALDGATFSSETTLNNGTNTIPFQARYFATGAATPGAANADATFKVQYQ</sequence>
<name>FM11_KLEPN</name>
<dbReference type="EMBL" id="M18282">
    <property type="protein sequence ID" value="AAA25062.1"/>
    <property type="molecule type" value="Genomic_DNA"/>
</dbReference>
<dbReference type="PIR" id="A28393">
    <property type="entry name" value="A28393"/>
</dbReference>
<dbReference type="SMR" id="P12266"/>
<dbReference type="GO" id="GO:0009289">
    <property type="term" value="C:pilus"/>
    <property type="evidence" value="ECO:0007669"/>
    <property type="project" value="UniProtKB-SubCell"/>
</dbReference>
<dbReference type="GO" id="GO:0043709">
    <property type="term" value="P:cell adhesion involved in single-species biofilm formation"/>
    <property type="evidence" value="ECO:0007669"/>
    <property type="project" value="TreeGrafter"/>
</dbReference>
<dbReference type="FunFam" id="2.60.40.1090:FF:000001">
    <property type="entry name" value="Type-1 fimbrial major subunit"/>
    <property type="match status" value="1"/>
</dbReference>
<dbReference type="Gene3D" id="2.60.40.1090">
    <property type="entry name" value="Fimbrial-type adhesion domain"/>
    <property type="match status" value="1"/>
</dbReference>
<dbReference type="InterPro" id="IPR000259">
    <property type="entry name" value="Adhesion_dom_fimbrial"/>
</dbReference>
<dbReference type="InterPro" id="IPR036937">
    <property type="entry name" value="Adhesion_dom_fimbrial_sf"/>
</dbReference>
<dbReference type="InterPro" id="IPR008966">
    <property type="entry name" value="Adhesion_dom_sf"/>
</dbReference>
<dbReference type="InterPro" id="IPR050263">
    <property type="entry name" value="Bact_Fimbrial_Adh_Pro"/>
</dbReference>
<dbReference type="NCBIfam" id="NF011741">
    <property type="entry name" value="PRK15194.1"/>
    <property type="match status" value="1"/>
</dbReference>
<dbReference type="PANTHER" id="PTHR33420">
    <property type="entry name" value="FIMBRIAL SUBUNIT ELFA-RELATED"/>
    <property type="match status" value="1"/>
</dbReference>
<dbReference type="PANTHER" id="PTHR33420:SF12">
    <property type="entry name" value="FIMBRIN-LIKE PROTEIN FIMI-RELATED"/>
    <property type="match status" value="1"/>
</dbReference>
<dbReference type="Pfam" id="PF00419">
    <property type="entry name" value="Fimbrial"/>
    <property type="match status" value="1"/>
</dbReference>
<dbReference type="SUPFAM" id="SSF49401">
    <property type="entry name" value="Bacterial adhesins"/>
    <property type="match status" value="1"/>
</dbReference>
<comment type="subcellular location">
    <subcellularLocation>
        <location>Fimbrium</location>
    </subcellularLocation>
</comment>
<comment type="similarity">
    <text evidence="2">Belongs to the fimbrial protein family.</text>
</comment>
<accession>P12266</accession>
<proteinExistence type="evidence at protein level"/>
<keyword id="KW-0903">Direct protein sequencing</keyword>
<keyword id="KW-1015">Disulfide bond</keyword>
<keyword id="KW-0281">Fimbrium</keyword>
<keyword id="KW-0732">Signal</keyword>